<gene>
    <name evidence="1" type="primary">apt</name>
    <name type="ordered locus">BCE33L4152</name>
</gene>
<dbReference type="EC" id="2.4.2.7" evidence="1"/>
<dbReference type="EMBL" id="CP000001">
    <property type="protein sequence ID" value="AAU16117.1"/>
    <property type="molecule type" value="Genomic_DNA"/>
</dbReference>
<dbReference type="RefSeq" id="WP_000346215.1">
    <property type="nucleotide sequence ID" value="NZ_CP009968.1"/>
</dbReference>
<dbReference type="SMR" id="Q634D6"/>
<dbReference type="KEGG" id="bcz:BCE33L4152"/>
<dbReference type="PATRIC" id="fig|288681.22.peg.1231"/>
<dbReference type="UniPathway" id="UPA00588">
    <property type="reaction ID" value="UER00646"/>
</dbReference>
<dbReference type="Proteomes" id="UP000002612">
    <property type="component" value="Chromosome"/>
</dbReference>
<dbReference type="GO" id="GO:0005737">
    <property type="term" value="C:cytoplasm"/>
    <property type="evidence" value="ECO:0007669"/>
    <property type="project" value="UniProtKB-SubCell"/>
</dbReference>
<dbReference type="GO" id="GO:0002055">
    <property type="term" value="F:adenine binding"/>
    <property type="evidence" value="ECO:0007669"/>
    <property type="project" value="TreeGrafter"/>
</dbReference>
<dbReference type="GO" id="GO:0003999">
    <property type="term" value="F:adenine phosphoribosyltransferase activity"/>
    <property type="evidence" value="ECO:0007669"/>
    <property type="project" value="UniProtKB-UniRule"/>
</dbReference>
<dbReference type="GO" id="GO:0016208">
    <property type="term" value="F:AMP binding"/>
    <property type="evidence" value="ECO:0007669"/>
    <property type="project" value="TreeGrafter"/>
</dbReference>
<dbReference type="GO" id="GO:0006168">
    <property type="term" value="P:adenine salvage"/>
    <property type="evidence" value="ECO:0007669"/>
    <property type="project" value="InterPro"/>
</dbReference>
<dbReference type="GO" id="GO:0044209">
    <property type="term" value="P:AMP salvage"/>
    <property type="evidence" value="ECO:0007669"/>
    <property type="project" value="UniProtKB-UniRule"/>
</dbReference>
<dbReference type="GO" id="GO:0006166">
    <property type="term" value="P:purine ribonucleoside salvage"/>
    <property type="evidence" value="ECO:0007669"/>
    <property type="project" value="UniProtKB-KW"/>
</dbReference>
<dbReference type="CDD" id="cd06223">
    <property type="entry name" value="PRTases_typeI"/>
    <property type="match status" value="1"/>
</dbReference>
<dbReference type="FunFam" id="3.40.50.2020:FF:000004">
    <property type="entry name" value="Adenine phosphoribosyltransferase"/>
    <property type="match status" value="1"/>
</dbReference>
<dbReference type="Gene3D" id="3.40.50.2020">
    <property type="match status" value="1"/>
</dbReference>
<dbReference type="HAMAP" id="MF_00004">
    <property type="entry name" value="Aden_phosphoribosyltr"/>
    <property type="match status" value="1"/>
</dbReference>
<dbReference type="InterPro" id="IPR005764">
    <property type="entry name" value="Ade_phspho_trans"/>
</dbReference>
<dbReference type="InterPro" id="IPR000836">
    <property type="entry name" value="PRibTrfase_dom"/>
</dbReference>
<dbReference type="InterPro" id="IPR029057">
    <property type="entry name" value="PRTase-like"/>
</dbReference>
<dbReference type="InterPro" id="IPR050054">
    <property type="entry name" value="UPRTase/APRTase"/>
</dbReference>
<dbReference type="NCBIfam" id="TIGR01090">
    <property type="entry name" value="apt"/>
    <property type="match status" value="1"/>
</dbReference>
<dbReference type="NCBIfam" id="NF002633">
    <property type="entry name" value="PRK02304.1-2"/>
    <property type="match status" value="1"/>
</dbReference>
<dbReference type="NCBIfam" id="NF002634">
    <property type="entry name" value="PRK02304.1-3"/>
    <property type="match status" value="1"/>
</dbReference>
<dbReference type="NCBIfam" id="NF002636">
    <property type="entry name" value="PRK02304.1-5"/>
    <property type="match status" value="1"/>
</dbReference>
<dbReference type="PANTHER" id="PTHR32315">
    <property type="entry name" value="ADENINE PHOSPHORIBOSYLTRANSFERASE"/>
    <property type="match status" value="1"/>
</dbReference>
<dbReference type="PANTHER" id="PTHR32315:SF3">
    <property type="entry name" value="ADENINE PHOSPHORIBOSYLTRANSFERASE"/>
    <property type="match status" value="1"/>
</dbReference>
<dbReference type="Pfam" id="PF00156">
    <property type="entry name" value="Pribosyltran"/>
    <property type="match status" value="1"/>
</dbReference>
<dbReference type="SUPFAM" id="SSF53271">
    <property type="entry name" value="PRTase-like"/>
    <property type="match status" value="1"/>
</dbReference>
<sequence>MDFKQHIAIVPDYPKEGIVFKDITPLMNDGKAYKAATDAIVEYAKERDIDVVVGPEARGFIIGCPVSYALEVGFAPVRKLGKLPREVITVDYGKEYGKDVLTIHKDAIKPGQRVLITDDLLATGGTIEATIKLVEELGGVVAGIAFLVELTYLDGRKMLDGYDVLVLEKY</sequence>
<comment type="function">
    <text evidence="1">Catalyzes a salvage reaction resulting in the formation of AMP, that is energically less costly than de novo synthesis.</text>
</comment>
<comment type="catalytic activity">
    <reaction evidence="1">
        <text>AMP + diphosphate = 5-phospho-alpha-D-ribose 1-diphosphate + adenine</text>
        <dbReference type="Rhea" id="RHEA:16609"/>
        <dbReference type="ChEBI" id="CHEBI:16708"/>
        <dbReference type="ChEBI" id="CHEBI:33019"/>
        <dbReference type="ChEBI" id="CHEBI:58017"/>
        <dbReference type="ChEBI" id="CHEBI:456215"/>
        <dbReference type="EC" id="2.4.2.7"/>
    </reaction>
</comment>
<comment type="pathway">
    <text evidence="1">Purine metabolism; AMP biosynthesis via salvage pathway; AMP from adenine: step 1/1.</text>
</comment>
<comment type="subunit">
    <text evidence="1">Homodimer.</text>
</comment>
<comment type="subcellular location">
    <subcellularLocation>
        <location evidence="1">Cytoplasm</location>
    </subcellularLocation>
</comment>
<comment type="similarity">
    <text evidence="1">Belongs to the purine/pyrimidine phosphoribosyltransferase family.</text>
</comment>
<name>APT_BACCZ</name>
<protein>
    <recommendedName>
        <fullName evidence="1">Adenine phosphoribosyltransferase</fullName>
        <shortName evidence="1">APRT</shortName>
        <ecNumber evidence="1">2.4.2.7</ecNumber>
    </recommendedName>
</protein>
<proteinExistence type="inferred from homology"/>
<feature type="chain" id="PRO_0000149348" description="Adenine phosphoribosyltransferase">
    <location>
        <begin position="1"/>
        <end position="170"/>
    </location>
</feature>
<reference key="1">
    <citation type="journal article" date="2006" name="J. Bacteriol.">
        <title>Pathogenomic sequence analysis of Bacillus cereus and Bacillus thuringiensis isolates closely related to Bacillus anthracis.</title>
        <authorList>
            <person name="Han C.S."/>
            <person name="Xie G."/>
            <person name="Challacombe J.F."/>
            <person name="Altherr M.R."/>
            <person name="Bhotika S.S."/>
            <person name="Bruce D."/>
            <person name="Campbell C.S."/>
            <person name="Campbell M.L."/>
            <person name="Chen J."/>
            <person name="Chertkov O."/>
            <person name="Cleland C."/>
            <person name="Dimitrijevic M."/>
            <person name="Doggett N.A."/>
            <person name="Fawcett J.J."/>
            <person name="Glavina T."/>
            <person name="Goodwin L.A."/>
            <person name="Hill K.K."/>
            <person name="Hitchcock P."/>
            <person name="Jackson P.J."/>
            <person name="Keim P."/>
            <person name="Kewalramani A.R."/>
            <person name="Longmire J."/>
            <person name="Lucas S."/>
            <person name="Malfatti S."/>
            <person name="McMurry K."/>
            <person name="Meincke L.J."/>
            <person name="Misra M."/>
            <person name="Moseman B.L."/>
            <person name="Mundt M."/>
            <person name="Munk A.C."/>
            <person name="Okinaka R.T."/>
            <person name="Parson-Quintana B."/>
            <person name="Reilly L.P."/>
            <person name="Richardson P."/>
            <person name="Robinson D.L."/>
            <person name="Rubin E."/>
            <person name="Saunders E."/>
            <person name="Tapia R."/>
            <person name="Tesmer J.G."/>
            <person name="Thayer N."/>
            <person name="Thompson L.S."/>
            <person name="Tice H."/>
            <person name="Ticknor L.O."/>
            <person name="Wills P.L."/>
            <person name="Brettin T.S."/>
            <person name="Gilna P."/>
        </authorList>
    </citation>
    <scope>NUCLEOTIDE SEQUENCE [LARGE SCALE GENOMIC DNA]</scope>
    <source>
        <strain>ZK / E33L</strain>
    </source>
</reference>
<organism>
    <name type="scientific">Bacillus cereus (strain ZK / E33L)</name>
    <dbReference type="NCBI Taxonomy" id="288681"/>
    <lineage>
        <taxon>Bacteria</taxon>
        <taxon>Bacillati</taxon>
        <taxon>Bacillota</taxon>
        <taxon>Bacilli</taxon>
        <taxon>Bacillales</taxon>
        <taxon>Bacillaceae</taxon>
        <taxon>Bacillus</taxon>
        <taxon>Bacillus cereus group</taxon>
    </lineage>
</organism>
<keyword id="KW-0963">Cytoplasm</keyword>
<keyword id="KW-0328">Glycosyltransferase</keyword>
<keyword id="KW-0660">Purine salvage</keyword>
<keyword id="KW-0808">Transferase</keyword>
<accession>Q634D6</accession>
<evidence type="ECO:0000255" key="1">
    <source>
        <dbReference type="HAMAP-Rule" id="MF_00004"/>
    </source>
</evidence>